<organism>
    <name type="scientific">Drosophila melanogaster</name>
    <name type="common">Fruit fly</name>
    <dbReference type="NCBI Taxonomy" id="7227"/>
    <lineage>
        <taxon>Eukaryota</taxon>
        <taxon>Metazoa</taxon>
        <taxon>Ecdysozoa</taxon>
        <taxon>Arthropoda</taxon>
        <taxon>Hexapoda</taxon>
        <taxon>Insecta</taxon>
        <taxon>Pterygota</taxon>
        <taxon>Neoptera</taxon>
        <taxon>Endopterygota</taxon>
        <taxon>Diptera</taxon>
        <taxon>Brachycera</taxon>
        <taxon>Muscomorpha</taxon>
        <taxon>Ephydroidea</taxon>
        <taxon>Drosophilidae</taxon>
        <taxon>Drosophila</taxon>
        <taxon>Sophophora</taxon>
    </lineage>
</organism>
<dbReference type="EC" id="2.7.7.-" evidence="2 3"/>
<dbReference type="EMBL" id="AE013599">
    <property type="protein sequence ID" value="AAO41387.2"/>
    <property type="molecule type" value="Genomic_DNA"/>
</dbReference>
<dbReference type="RefSeq" id="NP_788360.2">
    <property type="nucleotide sequence ID" value="NM_176180.2"/>
</dbReference>
<dbReference type="SMR" id="A1ZA55"/>
<dbReference type="FunCoup" id="A1ZA55">
    <property type="interactions" value="8"/>
</dbReference>
<dbReference type="PaxDb" id="7227-FBpp0300973"/>
<dbReference type="EnsemblMetazoa" id="FBtr0308816">
    <property type="protein sequence ID" value="FBpp0300973"/>
    <property type="gene ID" value="FBgn0034047"/>
</dbReference>
<dbReference type="GeneID" id="36744"/>
<dbReference type="KEGG" id="dme:Dmel_CG12970"/>
<dbReference type="UCSC" id="CG12970-RB">
    <property type="organism name" value="d. melanogaster"/>
</dbReference>
<dbReference type="AGR" id="FB:FBgn0034047"/>
<dbReference type="CTD" id="36744"/>
<dbReference type="FlyBase" id="FBgn0034047">
    <property type="gene designation" value="cGlr1"/>
</dbReference>
<dbReference type="VEuPathDB" id="VectorBase:FBgn0034047"/>
<dbReference type="eggNOG" id="ENOG502S61H">
    <property type="taxonomic scope" value="Eukaryota"/>
</dbReference>
<dbReference type="HOGENOM" id="CLU_034978_1_0_1"/>
<dbReference type="InParanoid" id="A1ZA55"/>
<dbReference type="OMA" id="ANLKSYH"/>
<dbReference type="OrthoDB" id="7249367at2759"/>
<dbReference type="PhylomeDB" id="A1ZA55"/>
<dbReference type="BioGRID-ORCS" id="36744">
    <property type="hits" value="0 hits in 1 CRISPR screen"/>
</dbReference>
<dbReference type="GenomeRNAi" id="36744"/>
<dbReference type="PRO" id="PR:A1ZA55"/>
<dbReference type="Proteomes" id="UP000000803">
    <property type="component" value="Chromosome 2R"/>
</dbReference>
<dbReference type="Bgee" id="FBgn0034047">
    <property type="expression patterns" value="Expressed in adult differentiating enterocyte in digestive tract and 3 other cell types or tissues"/>
</dbReference>
<dbReference type="GO" id="GO:0005829">
    <property type="term" value="C:cytosol"/>
    <property type="evidence" value="ECO:0000305"/>
    <property type="project" value="FlyBase"/>
</dbReference>
<dbReference type="GO" id="GO:0061501">
    <property type="term" value="F:2',3'-cyclic GMP-AMP synthase activity"/>
    <property type="evidence" value="ECO:0000314"/>
    <property type="project" value="FlyBase"/>
</dbReference>
<dbReference type="GO" id="GO:0140700">
    <property type="term" value="F:3',2'-cyclic GMP-AMP synthase activity"/>
    <property type="evidence" value="ECO:0000314"/>
    <property type="project" value="UniProtKB"/>
</dbReference>
<dbReference type="GO" id="GO:0005524">
    <property type="term" value="F:ATP binding"/>
    <property type="evidence" value="ECO:0007669"/>
    <property type="project" value="UniProtKB-KW"/>
</dbReference>
<dbReference type="GO" id="GO:0003725">
    <property type="term" value="F:double-stranded RNA binding"/>
    <property type="evidence" value="ECO:0000314"/>
    <property type="project" value="UniProtKB"/>
</dbReference>
<dbReference type="GO" id="GO:0005525">
    <property type="term" value="F:GTP binding"/>
    <property type="evidence" value="ECO:0007669"/>
    <property type="project" value="UniProtKB-KW"/>
</dbReference>
<dbReference type="GO" id="GO:0046872">
    <property type="term" value="F:metal ion binding"/>
    <property type="evidence" value="ECO:0007669"/>
    <property type="project" value="UniProtKB-KW"/>
</dbReference>
<dbReference type="GO" id="GO:0098586">
    <property type="term" value="P:cellular response to virus"/>
    <property type="evidence" value="ECO:0000314"/>
    <property type="project" value="FlyBase"/>
</dbReference>
<dbReference type="GO" id="GO:0140896">
    <property type="term" value="P:cGAS/STING signaling pathway"/>
    <property type="evidence" value="ECO:0000314"/>
    <property type="project" value="FlyBase"/>
</dbReference>
<dbReference type="GO" id="GO:0051607">
    <property type="term" value="P:defense response to virus"/>
    <property type="evidence" value="ECO:0000314"/>
    <property type="project" value="UniProt"/>
</dbReference>
<dbReference type="GO" id="GO:1902615">
    <property type="term" value="P:immune response involved in response to exogenous dsRNA"/>
    <property type="evidence" value="ECO:0000315"/>
    <property type="project" value="FlyBase"/>
</dbReference>
<dbReference type="GO" id="GO:0045087">
    <property type="term" value="P:innate immune response"/>
    <property type="evidence" value="ECO:0007669"/>
    <property type="project" value="UniProtKB-KW"/>
</dbReference>
<dbReference type="GO" id="GO:0043330">
    <property type="term" value="P:response to exogenous dsRNA"/>
    <property type="evidence" value="ECO:0000314"/>
    <property type="project" value="UniProt"/>
</dbReference>
<dbReference type="Gene3D" id="1.10.1410.40">
    <property type="match status" value="1"/>
</dbReference>
<dbReference type="Gene3D" id="3.30.460.90">
    <property type="match status" value="1"/>
</dbReference>
<dbReference type="InterPro" id="IPR046903">
    <property type="entry name" value="Mab-21-like_nuc_Trfase"/>
</dbReference>
<dbReference type="InterPro" id="IPR046906">
    <property type="entry name" value="Mab-21_HhH/H2TH-like"/>
</dbReference>
<dbReference type="InterPro" id="IPR024810">
    <property type="entry name" value="MAB21L/cGLR"/>
</dbReference>
<dbReference type="PANTHER" id="PTHR10656">
    <property type="entry name" value="CELL FATE DETERMINING PROTEIN MAB21-RELATED"/>
    <property type="match status" value="1"/>
</dbReference>
<dbReference type="PANTHER" id="PTHR10656:SF42">
    <property type="entry name" value="CYCLIC GMP-AMP SYNTHASE-LIKE PROTEIN-RELATED"/>
    <property type="match status" value="1"/>
</dbReference>
<dbReference type="Pfam" id="PF03281">
    <property type="entry name" value="Mab-21"/>
    <property type="match status" value="1"/>
</dbReference>
<dbReference type="Pfam" id="PF20266">
    <property type="entry name" value="Mab-21_C"/>
    <property type="match status" value="1"/>
</dbReference>
<dbReference type="SMART" id="SM01265">
    <property type="entry name" value="Mab-21"/>
    <property type="match status" value="1"/>
</dbReference>
<keyword id="KW-0051">Antiviral defense</keyword>
<keyword id="KW-0067">ATP-binding</keyword>
<keyword id="KW-0342">GTP-binding</keyword>
<keyword id="KW-0391">Immunity</keyword>
<keyword id="KW-0399">Innate immunity</keyword>
<keyword id="KW-0460">Magnesium</keyword>
<keyword id="KW-0464">Manganese</keyword>
<keyword id="KW-0479">Metal-binding</keyword>
<keyword id="KW-0547">Nucleotide-binding</keyword>
<keyword id="KW-0548">Nucleotidyltransferase</keyword>
<keyword id="KW-1185">Reference proteome</keyword>
<keyword id="KW-0694">RNA-binding</keyword>
<keyword id="KW-0808">Transferase</keyword>
<feature type="chain" id="PRO_0000454441" description="Cyclic GMP-AMP synthase-like receptor 1">
    <location>
        <begin position="1"/>
        <end position="378"/>
    </location>
</feature>
<feature type="binding site" evidence="1">
    <location>
        <begin position="71"/>
        <end position="73"/>
    </location>
    <ligand>
        <name>ATP</name>
        <dbReference type="ChEBI" id="CHEBI:30616"/>
    </ligand>
</feature>
<feature type="binding site" evidence="1">
    <location>
        <position position="71"/>
    </location>
    <ligand>
        <name>Mg(2+)</name>
        <dbReference type="ChEBI" id="CHEBI:18420"/>
        <note>catalytic</note>
    </ligand>
</feature>
<feature type="binding site" evidence="1">
    <location>
        <position position="73"/>
    </location>
    <ligand>
        <name>Mg(2+)</name>
        <dbReference type="ChEBI" id="CHEBI:18420"/>
        <note>catalytic</note>
    </ligand>
</feature>
<feature type="binding site" evidence="1">
    <location>
        <position position="187"/>
    </location>
    <ligand>
        <name>GTP</name>
        <dbReference type="ChEBI" id="CHEBI:37565"/>
    </ligand>
</feature>
<feature type="binding site" evidence="1">
    <location>
        <position position="187"/>
    </location>
    <ligand>
        <name>Mg(2+)</name>
        <dbReference type="ChEBI" id="CHEBI:18420"/>
        <note>catalytic</note>
    </ligand>
</feature>
<feature type="binding site" evidence="1">
    <location>
        <begin position="233"/>
        <end position="240"/>
    </location>
    <ligand>
        <name>GTP</name>
        <dbReference type="ChEBI" id="CHEBI:37565"/>
    </ligand>
</feature>
<feature type="binding site" evidence="1">
    <location>
        <begin position="237"/>
        <end position="240"/>
    </location>
    <ligand>
        <name>ATP</name>
        <dbReference type="ChEBI" id="CHEBI:30616"/>
    </ligand>
</feature>
<feature type="binding site" evidence="1">
    <location>
        <position position="258"/>
    </location>
    <ligand>
        <name>ATP</name>
        <dbReference type="ChEBI" id="CHEBI:30616"/>
    </ligand>
</feature>
<feature type="binding site" evidence="1">
    <location>
        <begin position="271"/>
        <end position="275"/>
    </location>
    <ligand>
        <name>ATP</name>
        <dbReference type="ChEBI" id="CHEBI:30616"/>
    </ligand>
</feature>
<feature type="mutagenesis site" description="Abolished ability to activate Sting." evidence="2">
    <original>R</original>
    <variation>E</variation>
    <location>
        <position position="23"/>
    </location>
</feature>
<feature type="mutagenesis site" description="Abolished ability to activate Sting." evidence="2">
    <original>K</original>
    <variation>E</variation>
    <location>
        <position position="42"/>
    </location>
</feature>
<feature type="mutagenesis site" description="Abolished ability to activate Sting." evidence="2">
    <original>K</original>
    <variation>E</variation>
    <location>
        <position position="52"/>
    </location>
</feature>
<feature type="mutagenesis site" description="Abolished nucleotidyltransferase activity." evidence="3">
    <original>EFD</original>
    <variation>AFA</variation>
    <location>
        <begin position="71"/>
        <end position="73"/>
    </location>
</feature>
<feature type="mutagenesis site" description="Abolished ability to activate Sting." evidence="2">
    <original>D</original>
    <variation>A</variation>
    <location>
        <position position="73"/>
    </location>
</feature>
<feature type="mutagenesis site" description="Abolished ability to activate Sting." evidence="2">
    <original>R</original>
    <variation>E</variation>
    <location>
        <position position="241"/>
    </location>
</feature>
<feature type="mutagenesis site" description="Abolished ability to activate Sting." evidence="2">
    <original>K</original>
    <variation>E</variation>
    <location>
        <position position="251"/>
    </location>
</feature>
<sequence length="378" mass="43386">MAMNLENIVNQATAQYVKIKEHREPYTAHYNALKDKVYSEWKSSAVLGKLLKGSTLCGGYGDKLKVSIPDEFDLLIHLVFPENDKIIVKADASKPGNVILDMTKVMEIIGSQEHNKPVFDRLQKIVNNKKQLLEDKLNSFLESIMTQTLNKMGNQIEVAGRISHLQYKKCGPAHTIFVKGSCKYSVDFVPAIRLSAAQVVLAPEQRIHFGETLYWDAIPKPMKPAKTDNTSFTSSFYEAERRLLYGKQFLKPAIRLMKQNRNVKNKANLKSYHIKTLFLWQVIQQDPSYWSNSPKDIFIEMLGKLADSLALTPKKGKLPFFWDPKLDMFAQLTDSQRTDLYNHFRKCEYTFRKDNGNVNDCTENNVHSSFSKNTTYKL</sequence>
<comment type="function">
    <text evidence="2 3">Nucleotidyltransferase that catalyzes the formation of cyclic GMP-AMP (3',2'-cGAMP) from ATP and GTP and plays a key role in antiviral innate immunity (PubMed:34261127, PubMed:34261128). Synthesizes 3',2'-cGAMP in a two-step reaction through production of the linear intermediate pppA(2'-5')pG (PubMed:34261127). Acts as a key sensor of double-stranded RNA (dsRNA), the presence of dsRNA in the cytoplasm being a danger signal that triggers the immune responses (PubMed:34261127). Directly binds dsRNA, activating the nucleotidyltransferase activity, leading to synthesis of 3',2'-cGAMP, a second messenger that binds to and activates Sting, thereby triggering the antiviral immune response via activation of the NF-kappa-B transcription factor Rel (Relish) (PubMed:34261127, PubMed:34261128). 3',2'-cGAMP is protected from poxin cleavage (PubMed:34261127).</text>
</comment>
<comment type="catalytic activity">
    <reaction evidence="2 3">
        <text>GTP + ATP = 3',2'-cGAMP + 2 diphosphate</text>
        <dbReference type="Rhea" id="RHEA:68344"/>
        <dbReference type="ChEBI" id="CHEBI:30616"/>
        <dbReference type="ChEBI" id="CHEBI:33019"/>
        <dbReference type="ChEBI" id="CHEBI:37565"/>
        <dbReference type="ChEBI" id="CHEBI:177334"/>
    </reaction>
    <physiologicalReaction direction="left-to-right" evidence="2">
        <dbReference type="Rhea" id="RHEA:68345"/>
    </physiologicalReaction>
</comment>
<comment type="catalytic activity">
    <reaction evidence="2 3">
        <text>GTP + ATP = pppA(2'-5')pG + diphosphate</text>
        <dbReference type="Rhea" id="RHEA:68348"/>
        <dbReference type="ChEBI" id="CHEBI:30616"/>
        <dbReference type="ChEBI" id="CHEBI:33019"/>
        <dbReference type="ChEBI" id="CHEBI:37565"/>
        <dbReference type="ChEBI" id="CHEBI:177335"/>
    </reaction>
    <physiologicalReaction direction="left-to-right" evidence="2">
        <dbReference type="Rhea" id="RHEA:68349"/>
    </physiologicalReaction>
</comment>
<comment type="catalytic activity">
    <reaction evidence="2 3">
        <text>pppA(2'-5')pG = 3',2'-cGAMP + diphosphate</text>
        <dbReference type="Rhea" id="RHEA:68352"/>
        <dbReference type="ChEBI" id="CHEBI:33019"/>
        <dbReference type="ChEBI" id="CHEBI:177334"/>
        <dbReference type="ChEBI" id="CHEBI:177335"/>
    </reaction>
    <physiologicalReaction direction="left-to-right" evidence="2">
        <dbReference type="Rhea" id="RHEA:68353"/>
    </physiologicalReaction>
</comment>
<comment type="cofactor">
    <cofactor evidence="2">
        <name>Mg(2+)</name>
        <dbReference type="ChEBI" id="CHEBI:18420"/>
    </cofactor>
    <cofactor evidence="2">
        <name>Mn(2+)</name>
        <dbReference type="ChEBI" id="CHEBI:29035"/>
    </cofactor>
</comment>
<comment type="activity regulation">
    <text evidence="2 3">The enzyme activity is specifically activated by double-stranded RNA (dsRNA) (PubMed:34261127, PubMed:34261128). Recognizes long dsRNA (&gt;30 bp) with no preference for 5' RNA phosphorylation (PubMed:34261127).</text>
</comment>
<comment type="similarity">
    <text evidence="6">Belongs to the mab-21 family.</text>
</comment>
<gene>
    <name evidence="4 7" type="primary">cGlr1</name>
    <name evidence="7" type="ORF">CG12970</name>
</gene>
<accession>A1ZA55</accession>
<name>CGLR1_DROME</name>
<protein>
    <recommendedName>
        <fullName evidence="4">Cyclic GMP-AMP synthase-like receptor 1</fullName>
        <shortName evidence="4 5">cGLR1</shortName>
        <ecNumber evidence="2 3">2.7.7.-</ecNumber>
    </recommendedName>
</protein>
<proteinExistence type="evidence at protein level"/>
<evidence type="ECO:0000250" key="1">
    <source>
        <dbReference type="UniProtKB" id="Q8N884"/>
    </source>
</evidence>
<evidence type="ECO:0000269" key="2">
    <source>
    </source>
</evidence>
<evidence type="ECO:0000269" key="3">
    <source>
    </source>
</evidence>
<evidence type="ECO:0000303" key="4">
    <source>
    </source>
</evidence>
<evidence type="ECO:0000303" key="5">
    <source>
    </source>
</evidence>
<evidence type="ECO:0000305" key="6"/>
<evidence type="ECO:0000312" key="7">
    <source>
        <dbReference type="FlyBase" id="FBgn0034047"/>
    </source>
</evidence>
<reference key="1">
    <citation type="journal article" date="2000" name="Science">
        <title>The genome sequence of Drosophila melanogaster.</title>
        <authorList>
            <person name="Adams M.D."/>
            <person name="Celniker S.E."/>
            <person name="Holt R.A."/>
            <person name="Evans C.A."/>
            <person name="Gocayne J.D."/>
            <person name="Amanatides P.G."/>
            <person name="Scherer S.E."/>
            <person name="Li P.W."/>
            <person name="Hoskins R.A."/>
            <person name="Galle R.F."/>
            <person name="George R.A."/>
            <person name="Lewis S.E."/>
            <person name="Richards S."/>
            <person name="Ashburner M."/>
            <person name="Henderson S.N."/>
            <person name="Sutton G.G."/>
            <person name="Wortman J.R."/>
            <person name="Yandell M.D."/>
            <person name="Zhang Q."/>
            <person name="Chen L.X."/>
            <person name="Brandon R.C."/>
            <person name="Rogers Y.-H.C."/>
            <person name="Blazej R.G."/>
            <person name="Champe M."/>
            <person name="Pfeiffer B.D."/>
            <person name="Wan K.H."/>
            <person name="Doyle C."/>
            <person name="Baxter E.G."/>
            <person name="Helt G."/>
            <person name="Nelson C.R."/>
            <person name="Miklos G.L.G."/>
            <person name="Abril J.F."/>
            <person name="Agbayani A."/>
            <person name="An H.-J."/>
            <person name="Andrews-Pfannkoch C."/>
            <person name="Baldwin D."/>
            <person name="Ballew R.M."/>
            <person name="Basu A."/>
            <person name="Baxendale J."/>
            <person name="Bayraktaroglu L."/>
            <person name="Beasley E.M."/>
            <person name="Beeson K.Y."/>
            <person name="Benos P.V."/>
            <person name="Berman B.P."/>
            <person name="Bhandari D."/>
            <person name="Bolshakov S."/>
            <person name="Borkova D."/>
            <person name="Botchan M.R."/>
            <person name="Bouck J."/>
            <person name="Brokstein P."/>
            <person name="Brottier P."/>
            <person name="Burtis K.C."/>
            <person name="Busam D.A."/>
            <person name="Butler H."/>
            <person name="Cadieu E."/>
            <person name="Center A."/>
            <person name="Chandra I."/>
            <person name="Cherry J.M."/>
            <person name="Cawley S."/>
            <person name="Dahlke C."/>
            <person name="Davenport L.B."/>
            <person name="Davies P."/>
            <person name="de Pablos B."/>
            <person name="Delcher A."/>
            <person name="Deng Z."/>
            <person name="Mays A.D."/>
            <person name="Dew I."/>
            <person name="Dietz S.M."/>
            <person name="Dodson K."/>
            <person name="Doup L.E."/>
            <person name="Downes M."/>
            <person name="Dugan-Rocha S."/>
            <person name="Dunkov B.C."/>
            <person name="Dunn P."/>
            <person name="Durbin K.J."/>
            <person name="Evangelista C.C."/>
            <person name="Ferraz C."/>
            <person name="Ferriera S."/>
            <person name="Fleischmann W."/>
            <person name="Fosler C."/>
            <person name="Gabrielian A.E."/>
            <person name="Garg N.S."/>
            <person name="Gelbart W.M."/>
            <person name="Glasser K."/>
            <person name="Glodek A."/>
            <person name="Gong F."/>
            <person name="Gorrell J.H."/>
            <person name="Gu Z."/>
            <person name="Guan P."/>
            <person name="Harris M."/>
            <person name="Harris N.L."/>
            <person name="Harvey D.A."/>
            <person name="Heiman T.J."/>
            <person name="Hernandez J.R."/>
            <person name="Houck J."/>
            <person name="Hostin D."/>
            <person name="Houston K.A."/>
            <person name="Howland T.J."/>
            <person name="Wei M.-H."/>
            <person name="Ibegwam C."/>
            <person name="Jalali M."/>
            <person name="Kalush F."/>
            <person name="Karpen G.H."/>
            <person name="Ke Z."/>
            <person name="Kennison J.A."/>
            <person name="Ketchum K.A."/>
            <person name="Kimmel B.E."/>
            <person name="Kodira C.D."/>
            <person name="Kraft C.L."/>
            <person name="Kravitz S."/>
            <person name="Kulp D."/>
            <person name="Lai Z."/>
            <person name="Lasko P."/>
            <person name="Lei Y."/>
            <person name="Levitsky A.A."/>
            <person name="Li J.H."/>
            <person name="Li Z."/>
            <person name="Liang Y."/>
            <person name="Lin X."/>
            <person name="Liu X."/>
            <person name="Mattei B."/>
            <person name="McIntosh T.C."/>
            <person name="McLeod M.P."/>
            <person name="McPherson D."/>
            <person name="Merkulov G."/>
            <person name="Milshina N.V."/>
            <person name="Mobarry C."/>
            <person name="Morris J."/>
            <person name="Moshrefi A."/>
            <person name="Mount S.M."/>
            <person name="Moy M."/>
            <person name="Murphy B."/>
            <person name="Murphy L."/>
            <person name="Muzny D.M."/>
            <person name="Nelson D.L."/>
            <person name="Nelson D.R."/>
            <person name="Nelson K.A."/>
            <person name="Nixon K."/>
            <person name="Nusskern D.R."/>
            <person name="Pacleb J.M."/>
            <person name="Palazzolo M."/>
            <person name="Pittman G.S."/>
            <person name="Pan S."/>
            <person name="Pollard J."/>
            <person name="Puri V."/>
            <person name="Reese M.G."/>
            <person name="Reinert K."/>
            <person name="Remington K."/>
            <person name="Saunders R.D.C."/>
            <person name="Scheeler F."/>
            <person name="Shen H."/>
            <person name="Shue B.C."/>
            <person name="Siden-Kiamos I."/>
            <person name="Simpson M."/>
            <person name="Skupski M.P."/>
            <person name="Smith T.J."/>
            <person name="Spier E."/>
            <person name="Spradling A.C."/>
            <person name="Stapleton M."/>
            <person name="Strong R."/>
            <person name="Sun E."/>
            <person name="Svirskas R."/>
            <person name="Tector C."/>
            <person name="Turner R."/>
            <person name="Venter E."/>
            <person name="Wang A.H."/>
            <person name="Wang X."/>
            <person name="Wang Z.-Y."/>
            <person name="Wassarman D.A."/>
            <person name="Weinstock G.M."/>
            <person name="Weissenbach J."/>
            <person name="Williams S.M."/>
            <person name="Woodage T."/>
            <person name="Worley K.C."/>
            <person name="Wu D."/>
            <person name="Yang S."/>
            <person name="Yao Q.A."/>
            <person name="Ye J."/>
            <person name="Yeh R.-F."/>
            <person name="Zaveri J.S."/>
            <person name="Zhan M."/>
            <person name="Zhang G."/>
            <person name="Zhao Q."/>
            <person name="Zheng L."/>
            <person name="Zheng X.H."/>
            <person name="Zhong F.N."/>
            <person name="Zhong W."/>
            <person name="Zhou X."/>
            <person name="Zhu S.C."/>
            <person name="Zhu X."/>
            <person name="Smith H.O."/>
            <person name="Gibbs R.A."/>
            <person name="Myers E.W."/>
            <person name="Rubin G.M."/>
            <person name="Venter J.C."/>
        </authorList>
    </citation>
    <scope>NUCLEOTIDE SEQUENCE [LARGE SCALE GENOMIC DNA]</scope>
    <source>
        <strain>Berkeley</strain>
    </source>
</reference>
<reference key="2">
    <citation type="journal article" date="2002" name="Genome Biol.">
        <title>Annotation of the Drosophila melanogaster euchromatic genome: a systematic review.</title>
        <authorList>
            <person name="Misra S."/>
            <person name="Crosby M.A."/>
            <person name="Mungall C.J."/>
            <person name="Matthews B.B."/>
            <person name="Campbell K.S."/>
            <person name="Hradecky P."/>
            <person name="Huang Y."/>
            <person name="Kaminker J.S."/>
            <person name="Millburn G.H."/>
            <person name="Prochnik S.E."/>
            <person name="Smith C.D."/>
            <person name="Tupy J.L."/>
            <person name="Whitfield E.J."/>
            <person name="Bayraktaroglu L."/>
            <person name="Berman B.P."/>
            <person name="Bettencourt B.R."/>
            <person name="Celniker S.E."/>
            <person name="de Grey A.D.N.J."/>
            <person name="Drysdale R.A."/>
            <person name="Harris N.L."/>
            <person name="Richter J."/>
            <person name="Russo S."/>
            <person name="Schroeder A.J."/>
            <person name="Shu S.Q."/>
            <person name="Stapleton M."/>
            <person name="Yamada C."/>
            <person name="Ashburner M."/>
            <person name="Gelbart W.M."/>
            <person name="Rubin G.M."/>
            <person name="Lewis S.E."/>
        </authorList>
    </citation>
    <scope>GENOME REANNOTATION</scope>
    <source>
        <strain>Berkeley</strain>
    </source>
</reference>
<reference key="3">
    <citation type="journal article" date="2021" name="Nature">
        <title>cGAS-like receptors sense RNA and control 3'2'-cGAMP signaling in Drosophila.</title>
        <authorList>
            <person name="Slavik K.M."/>
            <person name="Morehouse B.R."/>
            <person name="Ragucci A.E."/>
            <person name="Zhou W."/>
            <person name="Ai X."/>
            <person name="Chen Y."/>
            <person name="Li L."/>
            <person name="Wei Z."/>
            <person name="Baehre H."/>
            <person name="Koenig M."/>
            <person name="Seifert R."/>
            <person name="Lee A.S.Y."/>
            <person name="Cai H."/>
            <person name="Imler J.L."/>
            <person name="Kranzusch P.J."/>
        </authorList>
    </citation>
    <scope>FUNCTION</scope>
    <scope>CATALYTIC ACTIVITY</scope>
    <scope>ACTIVITY REGULATION</scope>
    <scope>COFACTOR</scope>
    <scope>MUTAGENESIS OF ARG-23; LYS-42; LYS-52; ASP-73; ARG-241 AND LYS-251</scope>
</reference>
<reference key="4">
    <citation type="journal article" date="2021" name="Nature">
        <title>Two cGAS-like receptors induce antiviral immunity in Drosophila.</title>
        <authorList>
            <person name="Holleufer A."/>
            <person name="Winther K.G."/>
            <person name="Gad H.H."/>
            <person name="Ai X."/>
            <person name="Chen Y."/>
            <person name="Li L."/>
            <person name="Wei Z."/>
            <person name="Deng H."/>
            <person name="Liu J."/>
            <person name="Frederiksen N.A."/>
            <person name="Simonsen B."/>
            <person name="Andersen L.L."/>
            <person name="Kleigrewe K."/>
            <person name="Dalskov L."/>
            <person name="Pichlmair A."/>
            <person name="Cai H."/>
            <person name="Imler J.L."/>
            <person name="Hartmann R."/>
        </authorList>
    </citation>
    <scope>FUNCTION</scope>
    <scope>CATALYTIC ACTIVITY</scope>
    <scope>ACTIVITY REGULATION</scope>
    <scope>MUTAGENESIS OF 71-GLU--ASP-73</scope>
</reference>